<sequence>MFLVNSFLKGGGGGGGGGGGLGGGLGNVLGGLISGAGGGGGGGGGGGGGGGGGGGGTAMRILGGVISAISEAAAQYNPEPPPPRTHYSNIEANESEEVRQFRRLFAQLAGDDMEVSATELMNILNKVVTRHPDLKTDGFGIDTCRSMVAVMDSDTTGKLGFEEFKYLWNNIKRWQAIYKQFDTDRSGTICSSELPGAFEAAGFHLNEHLYNMIIRRYSDESGNMDFDNFISCLVRLDAMFRAFKSLDKDGTGQIQVNIQEWLQLTMYS</sequence>
<accession>P04632</accession>
<accession>A8K0P1</accession>
<accession>Q8WTX3</accession>
<accession>Q96EW0</accession>
<protein>
    <recommendedName>
        <fullName>Calpain small subunit 1</fullName>
        <shortName>CSS1</shortName>
    </recommendedName>
    <alternativeName>
        <fullName>Calcium-activated neutral proteinase small subunit</fullName>
        <shortName>CANP small subunit</shortName>
    </alternativeName>
    <alternativeName>
        <fullName>Calcium-dependent protease small subunit</fullName>
        <shortName>CDPS</shortName>
    </alternativeName>
    <alternativeName>
        <fullName>Calcium-dependent protease small subunit 1</fullName>
    </alternativeName>
    <alternativeName>
        <fullName>Calpain regulatory subunit</fullName>
    </alternativeName>
</protein>
<name>CPNS1_HUMAN</name>
<dbReference type="EMBL" id="X04106">
    <property type="protein sequence ID" value="CAA27726.1"/>
    <property type="molecule type" value="mRNA"/>
</dbReference>
<dbReference type="EMBL" id="M31511">
    <property type="protein sequence ID" value="AAA35646.1"/>
    <property type="molecule type" value="Genomic_DNA"/>
</dbReference>
<dbReference type="EMBL" id="M31502">
    <property type="protein sequence ID" value="AAA35646.1"/>
    <property type="status" value="JOINED"/>
    <property type="molecule type" value="Genomic_DNA"/>
</dbReference>
<dbReference type="EMBL" id="M31503">
    <property type="protein sequence ID" value="AAA35646.1"/>
    <property type="status" value="JOINED"/>
    <property type="molecule type" value="Genomic_DNA"/>
</dbReference>
<dbReference type="EMBL" id="M31504">
    <property type="protein sequence ID" value="AAA35646.1"/>
    <property type="status" value="JOINED"/>
    <property type="molecule type" value="Genomic_DNA"/>
</dbReference>
<dbReference type="EMBL" id="M31505">
    <property type="protein sequence ID" value="AAA35646.1"/>
    <property type="status" value="JOINED"/>
    <property type="molecule type" value="Genomic_DNA"/>
</dbReference>
<dbReference type="EMBL" id="M31506">
    <property type="protein sequence ID" value="AAA35646.1"/>
    <property type="status" value="JOINED"/>
    <property type="molecule type" value="Genomic_DNA"/>
</dbReference>
<dbReference type="EMBL" id="M31507">
    <property type="protein sequence ID" value="AAA35646.1"/>
    <property type="status" value="JOINED"/>
    <property type="molecule type" value="Genomic_DNA"/>
</dbReference>
<dbReference type="EMBL" id="M31508">
    <property type="protein sequence ID" value="AAA35646.1"/>
    <property type="status" value="JOINED"/>
    <property type="molecule type" value="Genomic_DNA"/>
</dbReference>
<dbReference type="EMBL" id="M31509">
    <property type="protein sequence ID" value="AAA35646.1"/>
    <property type="status" value="JOINED"/>
    <property type="molecule type" value="Genomic_DNA"/>
</dbReference>
<dbReference type="EMBL" id="M31510">
    <property type="protein sequence ID" value="AAA35646.1"/>
    <property type="status" value="JOINED"/>
    <property type="molecule type" value="Genomic_DNA"/>
</dbReference>
<dbReference type="EMBL" id="AK289606">
    <property type="protein sequence ID" value="BAF82295.1"/>
    <property type="molecule type" value="mRNA"/>
</dbReference>
<dbReference type="EMBL" id="BT009775">
    <property type="protein sequence ID" value="AAP88777.1"/>
    <property type="molecule type" value="mRNA"/>
</dbReference>
<dbReference type="EMBL" id="AY789642">
    <property type="protein sequence ID" value="AAV40829.1"/>
    <property type="molecule type" value="Genomic_DNA"/>
</dbReference>
<dbReference type="EMBL" id="AD001527">
    <property type="protein sequence ID" value="AAB51183.1"/>
    <property type="molecule type" value="Genomic_DNA"/>
</dbReference>
<dbReference type="EMBL" id="AC002984">
    <property type="protein sequence ID" value="AAB81546.1"/>
    <property type="molecule type" value="Genomic_DNA"/>
</dbReference>
<dbReference type="EMBL" id="BC000592">
    <property type="protein sequence ID" value="AAH00592.1"/>
    <property type="molecule type" value="mRNA"/>
</dbReference>
<dbReference type="EMBL" id="BC007779">
    <property type="protein sequence ID" value="AAH07779.1"/>
    <property type="molecule type" value="mRNA"/>
</dbReference>
<dbReference type="EMBL" id="BC011903">
    <property type="protein sequence ID" value="AAH11903.1"/>
    <property type="molecule type" value="mRNA"/>
</dbReference>
<dbReference type="EMBL" id="BC017308">
    <property type="protein sequence ID" value="AAH17308.1"/>
    <property type="molecule type" value="mRNA"/>
</dbReference>
<dbReference type="EMBL" id="BC018931">
    <property type="protein sequence ID" value="AAH18931.1"/>
    <property type="molecule type" value="mRNA"/>
</dbReference>
<dbReference type="EMBL" id="BC021933">
    <property type="protein sequence ID" value="AAH21933.1"/>
    <property type="molecule type" value="mRNA"/>
</dbReference>
<dbReference type="EMBL" id="BC023643">
    <property type="protein sequence ID" value="AAH23643.1"/>
    <property type="molecule type" value="mRNA"/>
</dbReference>
<dbReference type="EMBL" id="BC064998">
    <property type="protein sequence ID" value="AAH64998.1"/>
    <property type="molecule type" value="mRNA"/>
</dbReference>
<dbReference type="CCDS" id="CCDS12489.1"/>
<dbReference type="PIR" id="A26107">
    <property type="entry name" value="CIHUL"/>
</dbReference>
<dbReference type="RefSeq" id="NP_001003962.1">
    <property type="nucleotide sequence ID" value="NM_001003962.3"/>
</dbReference>
<dbReference type="RefSeq" id="NP_001289561.1">
    <property type="nucleotide sequence ID" value="NM_001302632.2"/>
</dbReference>
<dbReference type="RefSeq" id="NP_001289562.1">
    <property type="nucleotide sequence ID" value="NM_001302633.1"/>
</dbReference>
<dbReference type="RefSeq" id="NP_001740.1">
    <property type="nucleotide sequence ID" value="NM_001749.4"/>
</dbReference>
<dbReference type="RefSeq" id="XP_005259352.1">
    <property type="nucleotide sequence ID" value="XM_005259295.1"/>
</dbReference>
<dbReference type="RefSeq" id="XP_005259353.1">
    <property type="nucleotide sequence ID" value="XM_005259296.1"/>
</dbReference>
<dbReference type="PDB" id="1KFU">
    <property type="method" value="X-ray"/>
    <property type="resolution" value="2.50 A"/>
    <property type="chains" value="S=85-268"/>
</dbReference>
<dbReference type="PDB" id="1KFX">
    <property type="method" value="X-ray"/>
    <property type="resolution" value="3.15 A"/>
    <property type="chains" value="S=85-268"/>
</dbReference>
<dbReference type="PDB" id="4PHJ">
    <property type="method" value="X-ray"/>
    <property type="resolution" value="1.60 A"/>
    <property type="chains" value="A/B=96-268"/>
</dbReference>
<dbReference type="PDB" id="4PHK">
    <property type="method" value="X-ray"/>
    <property type="resolution" value="2.05 A"/>
    <property type="chains" value="A/B=96-268"/>
</dbReference>
<dbReference type="PDB" id="4PHM">
    <property type="method" value="X-ray"/>
    <property type="resolution" value="2.03 A"/>
    <property type="chains" value="A/B=96-268"/>
</dbReference>
<dbReference type="PDB" id="4WQ2">
    <property type="method" value="X-ray"/>
    <property type="resolution" value="1.64 A"/>
    <property type="chains" value="A/B=96-268"/>
</dbReference>
<dbReference type="PDB" id="4WQ3">
    <property type="method" value="X-ray"/>
    <property type="resolution" value="1.79 A"/>
    <property type="chains" value="A/B=96-268"/>
</dbReference>
<dbReference type="PDB" id="5D69">
    <property type="method" value="X-ray"/>
    <property type="resolution" value="1.97 A"/>
    <property type="chains" value="A/B=96-268"/>
</dbReference>
<dbReference type="PDB" id="6QLB">
    <property type="method" value="X-ray"/>
    <property type="resolution" value="2.32 A"/>
    <property type="chains" value="A/B/C/D=96-268"/>
</dbReference>
<dbReference type="PDBsum" id="1KFU"/>
<dbReference type="PDBsum" id="1KFX"/>
<dbReference type="PDBsum" id="4PHJ"/>
<dbReference type="PDBsum" id="4PHK"/>
<dbReference type="PDBsum" id="4PHM"/>
<dbReference type="PDBsum" id="4WQ2"/>
<dbReference type="PDBsum" id="4WQ3"/>
<dbReference type="PDBsum" id="5D69"/>
<dbReference type="PDBsum" id="6QLB"/>
<dbReference type="SMR" id="P04632"/>
<dbReference type="BioGRID" id="107276">
    <property type="interactions" value="119"/>
</dbReference>
<dbReference type="ComplexPortal" id="CPX-2674">
    <property type="entry name" value="M-Calpain complex"/>
</dbReference>
<dbReference type="ComplexPortal" id="CPX-4302">
    <property type="entry name" value="mu-Calpain complex"/>
</dbReference>
<dbReference type="CORUM" id="P04632"/>
<dbReference type="FunCoup" id="P04632">
    <property type="interactions" value="674"/>
</dbReference>
<dbReference type="IntAct" id="P04632">
    <property type="interactions" value="49"/>
</dbReference>
<dbReference type="MINT" id="P04632"/>
<dbReference type="STRING" id="9606.ENSP00000464849"/>
<dbReference type="BindingDB" id="P04632"/>
<dbReference type="ChEMBL" id="CHEMBL2111357"/>
<dbReference type="DrugBank" id="DB02570">
    <property type="generic name" value="PD150606"/>
</dbReference>
<dbReference type="GlyCosmos" id="P04632">
    <property type="glycosylation" value="2 sites, 1 glycan"/>
</dbReference>
<dbReference type="GlyGen" id="P04632">
    <property type="glycosylation" value="4 sites, 2 O-linked glycans (4 sites)"/>
</dbReference>
<dbReference type="iPTMnet" id="P04632"/>
<dbReference type="MetOSite" id="P04632"/>
<dbReference type="PhosphoSitePlus" id="P04632"/>
<dbReference type="SwissPalm" id="P04632"/>
<dbReference type="BioMuta" id="CAPNS1"/>
<dbReference type="DMDM" id="115612"/>
<dbReference type="OGP" id="P04632"/>
<dbReference type="REPRODUCTION-2DPAGE" id="IPI00025084"/>
<dbReference type="CPTAC" id="CPTAC-470"/>
<dbReference type="CPTAC" id="CPTAC-471"/>
<dbReference type="jPOST" id="P04632"/>
<dbReference type="MassIVE" id="P04632"/>
<dbReference type="PaxDb" id="9606-ENSP00000246533"/>
<dbReference type="PeptideAtlas" id="P04632"/>
<dbReference type="ProteomicsDB" id="51727"/>
<dbReference type="Pumba" id="P04632"/>
<dbReference type="TopDownProteomics" id="P04632"/>
<dbReference type="Antibodypedia" id="1704">
    <property type="antibodies" value="262 antibodies from 33 providers"/>
</dbReference>
<dbReference type="DNASU" id="826"/>
<dbReference type="Ensembl" id="ENST00000246533.8">
    <property type="protein sequence ID" value="ENSP00000246533.2"/>
    <property type="gene ID" value="ENSG00000126247.11"/>
</dbReference>
<dbReference type="Ensembl" id="ENST00000588815.5">
    <property type="protein sequence ID" value="ENSP00000464849.1"/>
    <property type="gene ID" value="ENSG00000126247.11"/>
</dbReference>
<dbReference type="GeneID" id="826"/>
<dbReference type="KEGG" id="hsa:826"/>
<dbReference type="MANE-Select" id="ENST00000246533.8">
    <property type="protein sequence ID" value="ENSP00000246533.2"/>
    <property type="RefSeq nucleotide sequence ID" value="NM_001749.4"/>
    <property type="RefSeq protein sequence ID" value="NP_001740.1"/>
</dbReference>
<dbReference type="UCSC" id="uc002odi.2">
    <property type="organism name" value="human"/>
</dbReference>
<dbReference type="AGR" id="HGNC:1481"/>
<dbReference type="CTD" id="826"/>
<dbReference type="DisGeNET" id="826"/>
<dbReference type="GeneCards" id="CAPNS1"/>
<dbReference type="HGNC" id="HGNC:1481">
    <property type="gene designation" value="CAPNS1"/>
</dbReference>
<dbReference type="HPA" id="ENSG00000126247">
    <property type="expression patterns" value="Low tissue specificity"/>
</dbReference>
<dbReference type="MalaCards" id="CAPNS1"/>
<dbReference type="MIM" id="114170">
    <property type="type" value="gene"/>
</dbReference>
<dbReference type="MIM" id="620777">
    <property type="type" value="phenotype"/>
</dbReference>
<dbReference type="neXtProt" id="NX_P04632"/>
<dbReference type="OpenTargets" id="ENSG00000126247"/>
<dbReference type="PharmGKB" id="PA26067"/>
<dbReference type="VEuPathDB" id="HostDB:ENSG00000126247"/>
<dbReference type="eggNOG" id="KOG0037">
    <property type="taxonomic scope" value="Eukaryota"/>
</dbReference>
<dbReference type="GeneTree" id="ENSGT00940000155478"/>
<dbReference type="InParanoid" id="P04632"/>
<dbReference type="OMA" id="QLYSMIV"/>
<dbReference type="OrthoDB" id="186625at2759"/>
<dbReference type="PAN-GO" id="P04632">
    <property type="GO annotations" value="1 GO annotation based on evolutionary models"/>
</dbReference>
<dbReference type="PhylomeDB" id="P04632"/>
<dbReference type="TreeFam" id="TF314682"/>
<dbReference type="BRENDA" id="3.4.22.53">
    <property type="organism ID" value="2681"/>
</dbReference>
<dbReference type="BRENDA" id="3.4.22.B24">
    <property type="organism ID" value="2681"/>
</dbReference>
<dbReference type="PathwayCommons" id="P04632"/>
<dbReference type="Reactome" id="R-HSA-1474228">
    <property type="pathway name" value="Degradation of the extracellular matrix"/>
</dbReference>
<dbReference type="Reactome" id="R-HSA-6809371">
    <property type="pathway name" value="Formation of the cornified envelope"/>
</dbReference>
<dbReference type="Reactome" id="R-HSA-8862803">
    <property type="pathway name" value="Deregulated CDK5 triggers multiple neurodegenerative pathways in Alzheimer's disease models"/>
</dbReference>
<dbReference type="Reactome" id="R-HSA-9856530">
    <property type="pathway name" value="High laminar flow shear stress activates signaling by PIEZO1 and PECAM1:CDH5:KDR in endothelial cells"/>
</dbReference>
<dbReference type="Reactome" id="R-HSA-9860927">
    <property type="pathway name" value="Turbulent (oscillatory, disturbed) flow shear stress activates signaling by PIEZO1 and integrins in endothelial cells"/>
</dbReference>
<dbReference type="SignaLink" id="P04632"/>
<dbReference type="BioGRID-ORCS" id="826">
    <property type="hits" value="16 hits in 1155 CRISPR screens"/>
</dbReference>
<dbReference type="CD-CODE" id="DEE660B4">
    <property type="entry name" value="Stress granule"/>
</dbReference>
<dbReference type="ChiTaRS" id="CAPNS1">
    <property type="organism name" value="human"/>
</dbReference>
<dbReference type="EvolutionaryTrace" id="P04632"/>
<dbReference type="GeneWiki" id="CAPNS1"/>
<dbReference type="GenomeRNAi" id="826"/>
<dbReference type="Pharos" id="P04632">
    <property type="development level" value="Tbio"/>
</dbReference>
<dbReference type="PRO" id="PR:P04632"/>
<dbReference type="Proteomes" id="UP000005640">
    <property type="component" value="Chromosome 19"/>
</dbReference>
<dbReference type="RNAct" id="P04632">
    <property type="molecule type" value="protein"/>
</dbReference>
<dbReference type="Bgee" id="ENSG00000126247">
    <property type="expression patterns" value="Expressed in metanephros cortex and 206 other cell types or tissues"/>
</dbReference>
<dbReference type="ExpressionAtlas" id="P04632">
    <property type="expression patterns" value="baseline and differential"/>
</dbReference>
<dbReference type="GO" id="GO:0110158">
    <property type="term" value="C:calpain complex"/>
    <property type="evidence" value="ECO:0000353"/>
    <property type="project" value="ComplexPortal"/>
</dbReference>
<dbReference type="GO" id="GO:0005829">
    <property type="term" value="C:cytosol"/>
    <property type="evidence" value="ECO:0000314"/>
    <property type="project" value="BHF-UCL"/>
</dbReference>
<dbReference type="GO" id="GO:0070062">
    <property type="term" value="C:extracellular exosome"/>
    <property type="evidence" value="ECO:0007005"/>
    <property type="project" value="UniProtKB"/>
</dbReference>
<dbReference type="GO" id="GO:0016020">
    <property type="term" value="C:membrane"/>
    <property type="evidence" value="ECO:0000314"/>
    <property type="project" value="BHF-UCL"/>
</dbReference>
<dbReference type="GO" id="GO:0005886">
    <property type="term" value="C:plasma membrane"/>
    <property type="evidence" value="ECO:0000304"/>
    <property type="project" value="Reactome"/>
</dbReference>
<dbReference type="GO" id="GO:0005509">
    <property type="term" value="F:calcium ion binding"/>
    <property type="evidence" value="ECO:0007669"/>
    <property type="project" value="InterPro"/>
</dbReference>
<dbReference type="GO" id="GO:0004198">
    <property type="term" value="F:calcium-dependent cysteine-type endopeptidase activity"/>
    <property type="evidence" value="ECO:0000314"/>
    <property type="project" value="MGI"/>
</dbReference>
<dbReference type="GO" id="GO:0008284">
    <property type="term" value="P:positive regulation of cell population proliferation"/>
    <property type="evidence" value="ECO:0000304"/>
    <property type="project" value="ProtInc"/>
</dbReference>
<dbReference type="GO" id="GO:0006508">
    <property type="term" value="P:proteolysis"/>
    <property type="evidence" value="ECO:0000303"/>
    <property type="project" value="ComplexPortal"/>
</dbReference>
<dbReference type="GO" id="GO:0016241">
    <property type="term" value="P:regulation of macroautophagy"/>
    <property type="evidence" value="ECO:0000303"/>
    <property type="project" value="ParkinsonsUK-UCL"/>
</dbReference>
<dbReference type="CDD" id="cd16188">
    <property type="entry name" value="EFh_PEF_CPNS1_2"/>
    <property type="match status" value="1"/>
</dbReference>
<dbReference type="FunFam" id="1.10.238.10:FF:000136">
    <property type="entry name" value="Calpain small subunit 1"/>
    <property type="match status" value="1"/>
</dbReference>
<dbReference type="Gene3D" id="1.10.238.10">
    <property type="entry name" value="EF-hand"/>
    <property type="match status" value="1"/>
</dbReference>
<dbReference type="InterPro" id="IPR011992">
    <property type="entry name" value="EF-hand-dom_pair"/>
</dbReference>
<dbReference type="InterPro" id="IPR018247">
    <property type="entry name" value="EF_Hand_1_Ca_BS"/>
</dbReference>
<dbReference type="InterPro" id="IPR002048">
    <property type="entry name" value="EF_hand_dom"/>
</dbReference>
<dbReference type="PANTHER" id="PTHR46735:SF1">
    <property type="entry name" value="CALPAIN SMALL SUBUNIT 1"/>
    <property type="match status" value="1"/>
</dbReference>
<dbReference type="PANTHER" id="PTHR46735">
    <property type="entry name" value="CALPAIN, SMALL SUBUNIT 1 A-RELATED"/>
    <property type="match status" value="1"/>
</dbReference>
<dbReference type="SUPFAM" id="SSF47473">
    <property type="entry name" value="EF-hand"/>
    <property type="match status" value="1"/>
</dbReference>
<dbReference type="PROSITE" id="PS00018">
    <property type="entry name" value="EF_HAND_1"/>
    <property type="match status" value="2"/>
</dbReference>
<dbReference type="PROSITE" id="PS50222">
    <property type="entry name" value="EF_HAND_2"/>
    <property type="match status" value="3"/>
</dbReference>
<gene>
    <name type="primary">CAPNS1</name>
    <name type="synonym">CAPN4</name>
    <name type="synonym">CAPNS</name>
</gene>
<comment type="function">
    <text evidence="2">Regulatory subunit of the calcium-regulated non-lysosomal thiol-protease which catalyzes limited proteolysis of substrates involved in cytoskeletal remodeling and signal transduction. Essential for embryonic development (By similarity).</text>
</comment>
<comment type="subunit">
    <text evidence="1">Homodimer or heterodimer of a large (catalytic) and a small (regulatory) subunit. In presence of calcium, the heterodimer dissociates (By similarity).</text>
</comment>
<comment type="interaction">
    <interactant intactId="EBI-711828">
        <id>P04632</id>
    </interactant>
    <interactant intactId="EBI-741181">
        <id>Q6RW13</id>
        <label>AGTRAP</label>
    </interactant>
    <organismsDiffer>false</organismsDiffer>
    <experiments>3</experiments>
</comment>
<comment type="interaction">
    <interactant intactId="EBI-711828">
        <id>P04632</id>
    </interactant>
    <interactant intactId="EBI-1028956">
        <id>P17655</id>
        <label>CAPN2</label>
    </interactant>
    <organismsDiffer>false</organismsDiffer>
    <experiments>6</experiments>
</comment>
<comment type="interaction">
    <interactant intactId="EBI-711828">
        <id>P04632</id>
    </interactant>
    <interactant intactId="EBI-11904873">
        <id>Q96NL8</id>
        <label>CFAP418</label>
    </interactant>
    <organismsDiffer>false</organismsDiffer>
    <experiments>2</experiments>
</comment>
<comment type="interaction">
    <interactant intactId="EBI-711828">
        <id>P04632</id>
    </interactant>
    <interactant intactId="EBI-1026476">
        <id>P20936</id>
        <label>RASA1</label>
    </interactant>
    <organismsDiffer>false</organismsDiffer>
    <experiments>3</experiments>
</comment>
<comment type="subcellular location">
    <subcellularLocation>
        <location evidence="1">Cytoplasm</location>
    </subcellularLocation>
    <subcellularLocation>
        <location evidence="1">Cell membrane</location>
    </subcellularLocation>
    <text evidence="1">Translocates to the plasma membrane upon calcium binding.</text>
</comment>
<comment type="domain">
    <text evidence="1">The contact of the 5th EF-hand domain from each monomer allows the formation of the homodimer and also appears to mediate the contact between the large catalytic subunit and small regulatory subunit for the formation of the heterodimer.</text>
</comment>
<comment type="domain">
    <text>EF-hand domains are paired. EF-hand 1 is paired with EF-hand 2 and EF-hand 3 is paired with EF-hand 4. The fifth EF-hand domain, left unpaired, does not bind the calcium but is responsible of the dimerization by EF-embrace. The first four EF-hand domains bind calcium, however it is not sure if the binding of EF-hand 4 to calcium is physiologically relevant.</text>
</comment>
<comment type="disease" evidence="5">
    <disease id="DI-06877">
        <name>Pulmonary hypertension, primary, 6</name>
        <acronym>PPH6</acronym>
        <description>A form of primary pulmonary hypertension, a disease defined by plexiform lesions of proliferating endothelial cells in pulmonary arterioles. The lesions lead to elevated pulmonary arterial pression, right ventricular failure, and death. Primary pulmonary hypertension exhibits incomplete penetrance, sex bias and variable age of onset, both within and between families. PPH6 is an autosomal recessive form.</description>
        <dbReference type="MIM" id="620777"/>
    </disease>
    <text>The disease may be caused by variants affecting the gene represented in this entry.</text>
</comment>
<comment type="online information" name="Calpains homepage">
    <link uri="https://cales.arizona.edu/calpains/"/>
</comment>
<reference key="1">
    <citation type="journal article" date="1986" name="Nucleic Acids Res.">
        <title>Nucleotide sequence of a cDNA coding for the small subunit of human calcium-dependent protease.</title>
        <authorList>
            <person name="Ohno S."/>
            <person name="Emori Y."/>
            <person name="Suzuki K."/>
        </authorList>
    </citation>
    <scope>NUCLEOTIDE SEQUENCE [MRNA]</scope>
</reference>
<reference key="2">
    <citation type="journal article" date="1986" name="Nucleic Acids Res.">
        <title>Gene organization of the small subunit of human calcium-activated neutral protease.</title>
        <authorList>
            <person name="Miyake S."/>
            <person name="Emori Y."/>
            <person name="Suzuki K."/>
        </authorList>
    </citation>
    <scope>NUCLEOTIDE SEQUENCE [GENOMIC DNA]</scope>
</reference>
<reference key="3">
    <citation type="journal article" date="2004" name="Nat. Genet.">
        <title>Complete sequencing and characterization of 21,243 full-length human cDNAs.</title>
        <authorList>
            <person name="Ota T."/>
            <person name="Suzuki Y."/>
            <person name="Nishikawa T."/>
            <person name="Otsuki T."/>
            <person name="Sugiyama T."/>
            <person name="Irie R."/>
            <person name="Wakamatsu A."/>
            <person name="Hayashi K."/>
            <person name="Sato H."/>
            <person name="Nagai K."/>
            <person name="Kimura K."/>
            <person name="Makita H."/>
            <person name="Sekine M."/>
            <person name="Obayashi M."/>
            <person name="Nishi T."/>
            <person name="Shibahara T."/>
            <person name="Tanaka T."/>
            <person name="Ishii S."/>
            <person name="Yamamoto J."/>
            <person name="Saito K."/>
            <person name="Kawai Y."/>
            <person name="Isono Y."/>
            <person name="Nakamura Y."/>
            <person name="Nagahari K."/>
            <person name="Murakami K."/>
            <person name="Yasuda T."/>
            <person name="Iwayanagi T."/>
            <person name="Wagatsuma M."/>
            <person name="Shiratori A."/>
            <person name="Sudo H."/>
            <person name="Hosoiri T."/>
            <person name="Kaku Y."/>
            <person name="Kodaira H."/>
            <person name="Kondo H."/>
            <person name="Sugawara M."/>
            <person name="Takahashi M."/>
            <person name="Kanda K."/>
            <person name="Yokoi T."/>
            <person name="Furuya T."/>
            <person name="Kikkawa E."/>
            <person name="Omura Y."/>
            <person name="Abe K."/>
            <person name="Kamihara K."/>
            <person name="Katsuta N."/>
            <person name="Sato K."/>
            <person name="Tanikawa M."/>
            <person name="Yamazaki M."/>
            <person name="Ninomiya K."/>
            <person name="Ishibashi T."/>
            <person name="Yamashita H."/>
            <person name="Murakawa K."/>
            <person name="Fujimori K."/>
            <person name="Tanai H."/>
            <person name="Kimata M."/>
            <person name="Watanabe M."/>
            <person name="Hiraoka S."/>
            <person name="Chiba Y."/>
            <person name="Ishida S."/>
            <person name="Ono Y."/>
            <person name="Takiguchi S."/>
            <person name="Watanabe S."/>
            <person name="Yosida M."/>
            <person name="Hotuta T."/>
            <person name="Kusano J."/>
            <person name="Kanehori K."/>
            <person name="Takahashi-Fujii A."/>
            <person name="Hara H."/>
            <person name="Tanase T.-O."/>
            <person name="Nomura Y."/>
            <person name="Togiya S."/>
            <person name="Komai F."/>
            <person name="Hara R."/>
            <person name="Takeuchi K."/>
            <person name="Arita M."/>
            <person name="Imose N."/>
            <person name="Musashino K."/>
            <person name="Yuuki H."/>
            <person name="Oshima A."/>
            <person name="Sasaki N."/>
            <person name="Aotsuka S."/>
            <person name="Yoshikawa Y."/>
            <person name="Matsunawa H."/>
            <person name="Ichihara T."/>
            <person name="Shiohata N."/>
            <person name="Sano S."/>
            <person name="Moriya S."/>
            <person name="Momiyama H."/>
            <person name="Satoh N."/>
            <person name="Takami S."/>
            <person name="Terashima Y."/>
            <person name="Suzuki O."/>
            <person name="Nakagawa S."/>
            <person name="Senoh A."/>
            <person name="Mizoguchi H."/>
            <person name="Goto Y."/>
            <person name="Shimizu F."/>
            <person name="Wakebe H."/>
            <person name="Hishigaki H."/>
            <person name="Watanabe T."/>
            <person name="Sugiyama A."/>
            <person name="Takemoto M."/>
            <person name="Kawakami B."/>
            <person name="Yamazaki M."/>
            <person name="Watanabe K."/>
            <person name="Kumagai A."/>
            <person name="Itakura S."/>
            <person name="Fukuzumi Y."/>
            <person name="Fujimori Y."/>
            <person name="Komiyama M."/>
            <person name="Tashiro H."/>
            <person name="Tanigami A."/>
            <person name="Fujiwara T."/>
            <person name="Ono T."/>
            <person name="Yamada K."/>
            <person name="Fujii Y."/>
            <person name="Ozaki K."/>
            <person name="Hirao M."/>
            <person name="Ohmori Y."/>
            <person name="Kawabata A."/>
            <person name="Hikiji T."/>
            <person name="Kobatake N."/>
            <person name="Inagaki H."/>
            <person name="Ikema Y."/>
            <person name="Okamoto S."/>
            <person name="Okitani R."/>
            <person name="Kawakami T."/>
            <person name="Noguchi S."/>
            <person name="Itoh T."/>
            <person name="Shigeta K."/>
            <person name="Senba T."/>
            <person name="Matsumura K."/>
            <person name="Nakajima Y."/>
            <person name="Mizuno T."/>
            <person name="Morinaga M."/>
            <person name="Sasaki M."/>
            <person name="Togashi T."/>
            <person name="Oyama M."/>
            <person name="Hata H."/>
            <person name="Watanabe M."/>
            <person name="Komatsu T."/>
            <person name="Mizushima-Sugano J."/>
            <person name="Satoh T."/>
            <person name="Shirai Y."/>
            <person name="Takahashi Y."/>
            <person name="Nakagawa K."/>
            <person name="Okumura K."/>
            <person name="Nagase T."/>
            <person name="Nomura N."/>
            <person name="Kikuchi H."/>
            <person name="Masuho Y."/>
            <person name="Yamashita R."/>
            <person name="Nakai K."/>
            <person name="Yada T."/>
            <person name="Nakamura Y."/>
            <person name="Ohara O."/>
            <person name="Isogai T."/>
            <person name="Sugano S."/>
        </authorList>
    </citation>
    <scope>NUCLEOTIDE SEQUENCE [LARGE SCALE MRNA]</scope>
</reference>
<reference key="4">
    <citation type="submission" date="2003-08" db="EMBL/GenBank/DDBJ databases">
        <title>Cloning of human full-length CDSs in BD Creator(TM) system donor vector.</title>
        <authorList>
            <person name="Kalnine N."/>
            <person name="Chen X."/>
            <person name="Rolfs A."/>
            <person name="Halleck A."/>
            <person name="Hines L."/>
            <person name="Eisenstein S."/>
            <person name="Koundinya M."/>
            <person name="Raphael J."/>
            <person name="Moreira D."/>
            <person name="Kelley T."/>
            <person name="LaBaer J."/>
            <person name="Lin Y."/>
            <person name="Phelan M."/>
            <person name="Farmer A."/>
        </authorList>
    </citation>
    <scope>NUCLEOTIDE SEQUENCE [LARGE SCALE MRNA]</scope>
</reference>
<reference key="5">
    <citation type="submission" date="2004-10" db="EMBL/GenBank/DDBJ databases">
        <authorList>
            <consortium name="NIEHS SNPs program"/>
        </authorList>
    </citation>
    <scope>NUCLEOTIDE SEQUENCE [GENOMIC DNA]</scope>
    <scope>VARIANT VAL-224</scope>
</reference>
<reference key="6">
    <citation type="journal article" date="2004" name="Nature">
        <title>The DNA sequence and biology of human chromosome 19.</title>
        <authorList>
            <person name="Grimwood J."/>
            <person name="Gordon L.A."/>
            <person name="Olsen A.S."/>
            <person name="Terry A."/>
            <person name="Schmutz J."/>
            <person name="Lamerdin J.E."/>
            <person name="Hellsten U."/>
            <person name="Goodstein D."/>
            <person name="Couronne O."/>
            <person name="Tran-Gyamfi M."/>
            <person name="Aerts A."/>
            <person name="Altherr M."/>
            <person name="Ashworth L."/>
            <person name="Bajorek E."/>
            <person name="Black S."/>
            <person name="Branscomb E."/>
            <person name="Caenepeel S."/>
            <person name="Carrano A.V."/>
            <person name="Caoile C."/>
            <person name="Chan Y.M."/>
            <person name="Christensen M."/>
            <person name="Cleland C.A."/>
            <person name="Copeland A."/>
            <person name="Dalin E."/>
            <person name="Dehal P."/>
            <person name="Denys M."/>
            <person name="Detter J.C."/>
            <person name="Escobar J."/>
            <person name="Flowers D."/>
            <person name="Fotopulos D."/>
            <person name="Garcia C."/>
            <person name="Georgescu A.M."/>
            <person name="Glavina T."/>
            <person name="Gomez M."/>
            <person name="Gonzales E."/>
            <person name="Groza M."/>
            <person name="Hammon N."/>
            <person name="Hawkins T."/>
            <person name="Haydu L."/>
            <person name="Ho I."/>
            <person name="Huang W."/>
            <person name="Israni S."/>
            <person name="Jett J."/>
            <person name="Kadner K."/>
            <person name="Kimball H."/>
            <person name="Kobayashi A."/>
            <person name="Larionov V."/>
            <person name="Leem S.-H."/>
            <person name="Lopez F."/>
            <person name="Lou Y."/>
            <person name="Lowry S."/>
            <person name="Malfatti S."/>
            <person name="Martinez D."/>
            <person name="McCready P.M."/>
            <person name="Medina C."/>
            <person name="Morgan J."/>
            <person name="Nelson K."/>
            <person name="Nolan M."/>
            <person name="Ovcharenko I."/>
            <person name="Pitluck S."/>
            <person name="Pollard M."/>
            <person name="Popkie A.P."/>
            <person name="Predki P."/>
            <person name="Quan G."/>
            <person name="Ramirez L."/>
            <person name="Rash S."/>
            <person name="Retterer J."/>
            <person name="Rodriguez A."/>
            <person name="Rogers S."/>
            <person name="Salamov A."/>
            <person name="Salazar A."/>
            <person name="She X."/>
            <person name="Smith D."/>
            <person name="Slezak T."/>
            <person name="Solovyev V."/>
            <person name="Thayer N."/>
            <person name="Tice H."/>
            <person name="Tsai M."/>
            <person name="Ustaszewska A."/>
            <person name="Vo N."/>
            <person name="Wagner M."/>
            <person name="Wheeler J."/>
            <person name="Wu K."/>
            <person name="Xie G."/>
            <person name="Yang J."/>
            <person name="Dubchak I."/>
            <person name="Furey T.S."/>
            <person name="DeJong P."/>
            <person name="Dickson M."/>
            <person name="Gordon D."/>
            <person name="Eichler E.E."/>
            <person name="Pennacchio L.A."/>
            <person name="Richardson P."/>
            <person name="Stubbs L."/>
            <person name="Rokhsar D.S."/>
            <person name="Myers R.M."/>
            <person name="Rubin E.M."/>
            <person name="Lucas S.M."/>
        </authorList>
    </citation>
    <scope>NUCLEOTIDE SEQUENCE [LARGE SCALE GENOMIC DNA]</scope>
</reference>
<reference key="7">
    <citation type="journal article" date="2004" name="Genome Res.">
        <title>The status, quality, and expansion of the NIH full-length cDNA project: the Mammalian Gene Collection (MGC).</title>
        <authorList>
            <consortium name="The MGC Project Team"/>
        </authorList>
    </citation>
    <scope>NUCLEOTIDE SEQUENCE [LARGE SCALE MRNA]</scope>
    <source>
        <tissue>Lung</tissue>
        <tissue>Muscle</tissue>
        <tissue>Pancreas</tissue>
        <tissue>Skin</tissue>
        <tissue>Uterus</tissue>
    </source>
</reference>
<reference key="8">
    <citation type="submission" date="2004-10" db="UniProtKB">
        <authorList>
            <person name="Bienvenut W.V."/>
        </authorList>
    </citation>
    <scope>PROTEIN SEQUENCE OF 1-9; 61-84 AND 159-165</scope>
    <scope>ACETYLATION AT MET-1</scope>
    <scope>IDENTIFICATION BY MASS SPECTROMETRY</scope>
    <source>
        <tissue>B-cell lymphoma</tissue>
    </source>
</reference>
<reference key="9">
    <citation type="journal article" date="2009" name="Anal. Chem.">
        <title>Lys-N and trypsin cover complementary parts of the phosphoproteome in a refined SCX-based approach.</title>
        <authorList>
            <person name="Gauci S."/>
            <person name="Helbig A.O."/>
            <person name="Slijper M."/>
            <person name="Krijgsveld J."/>
            <person name="Heck A.J."/>
            <person name="Mohammed S."/>
        </authorList>
    </citation>
    <scope>ACETYLATION [LARGE SCALE ANALYSIS] AT MET-1</scope>
    <scope>IDENTIFICATION BY MASS SPECTROMETRY [LARGE SCALE ANALYSIS]</scope>
</reference>
<reference key="10">
    <citation type="journal article" date="2009" name="Science">
        <title>Lysine acetylation targets protein complexes and co-regulates major cellular functions.</title>
        <authorList>
            <person name="Choudhary C."/>
            <person name="Kumar C."/>
            <person name="Gnad F."/>
            <person name="Nielsen M.L."/>
            <person name="Rehman M."/>
            <person name="Walther T.C."/>
            <person name="Olsen J.V."/>
            <person name="Mann M."/>
        </authorList>
    </citation>
    <scope>ACETYLATION [LARGE SCALE ANALYSIS] AT LYS-179</scope>
    <scope>IDENTIFICATION BY MASS SPECTROMETRY [LARGE SCALE ANALYSIS]</scope>
</reference>
<reference key="11">
    <citation type="journal article" date="2011" name="BMC Syst. Biol.">
        <title>Initial characterization of the human central proteome.</title>
        <authorList>
            <person name="Burkard T.R."/>
            <person name="Planyavsky M."/>
            <person name="Kaupe I."/>
            <person name="Breitwieser F.P."/>
            <person name="Buerckstuemmer T."/>
            <person name="Bennett K.L."/>
            <person name="Superti-Furga G."/>
            <person name="Colinge J."/>
        </authorList>
    </citation>
    <scope>IDENTIFICATION BY MASS SPECTROMETRY [LARGE SCALE ANALYSIS]</scope>
</reference>
<reference key="12">
    <citation type="journal article" date="2012" name="Mol. Cell. Proteomics">
        <title>Comparative large-scale characterisation of plant vs. mammal proteins reveals similar and idiosyncratic N-alpha acetylation features.</title>
        <authorList>
            <person name="Bienvenut W.V."/>
            <person name="Sumpton D."/>
            <person name="Martinez A."/>
            <person name="Lilla S."/>
            <person name="Espagne C."/>
            <person name="Meinnel T."/>
            <person name="Giglione C."/>
        </authorList>
    </citation>
    <scope>ACETYLATION [LARGE SCALE ANALYSIS] AT MET-1</scope>
    <scope>IDENTIFICATION BY MASS SPECTROMETRY [LARGE SCALE ANALYSIS]</scope>
</reference>
<reference key="13">
    <citation type="journal article" date="2013" name="J. Proteome Res.">
        <title>Toward a comprehensive characterization of a human cancer cell phosphoproteome.</title>
        <authorList>
            <person name="Zhou H."/>
            <person name="Di Palma S."/>
            <person name="Preisinger C."/>
            <person name="Peng M."/>
            <person name="Polat A.N."/>
            <person name="Heck A.J."/>
            <person name="Mohammed S."/>
        </authorList>
    </citation>
    <scope>PHOSPHORYLATION [LARGE SCALE ANALYSIS] AT SER-6</scope>
    <scope>IDENTIFICATION BY MASS SPECTROMETRY [LARGE SCALE ANALYSIS]</scope>
    <source>
        <tissue>Erythroleukemia</tissue>
    </source>
</reference>
<reference key="14">
    <citation type="journal article" date="2014" name="J. Proteomics">
        <title>An enzyme assisted RP-RPLC approach for in-depth analysis of human liver phosphoproteome.</title>
        <authorList>
            <person name="Bian Y."/>
            <person name="Song C."/>
            <person name="Cheng K."/>
            <person name="Dong M."/>
            <person name="Wang F."/>
            <person name="Huang J."/>
            <person name="Sun D."/>
            <person name="Wang L."/>
            <person name="Ye M."/>
            <person name="Zou H."/>
        </authorList>
    </citation>
    <scope>IDENTIFICATION BY MASS SPECTROMETRY [LARGE SCALE ANALYSIS]</scope>
    <source>
        <tissue>Liver</tissue>
    </source>
</reference>
<reference key="15">
    <citation type="journal article" date="2015" name="Proteomics">
        <title>N-terminome analysis of the human mitochondrial proteome.</title>
        <authorList>
            <person name="Vaca Jacome A.S."/>
            <person name="Rabilloud T."/>
            <person name="Schaeffer-Reiss C."/>
            <person name="Rompais M."/>
            <person name="Ayoub D."/>
            <person name="Lane L."/>
            <person name="Bairoch A."/>
            <person name="Van Dorsselaer A."/>
            <person name="Carapito C."/>
        </authorList>
    </citation>
    <scope>ACETYLATION [LARGE SCALE ANALYSIS] AT MET-1</scope>
    <scope>IDENTIFICATION BY MASS SPECTROMETRY [LARGE SCALE ANALYSIS]</scope>
</reference>
<reference key="16">
    <citation type="journal article" date="2000" name="Proc. Natl. Acad. Sci. U.S.A.">
        <title>The crystal structure of calcium-free human m-calpain suggests an electrostatic switch mechanism for activation by calcium.</title>
        <authorList>
            <person name="Strobl S."/>
            <person name="Fernandez-Catalan C."/>
            <person name="Braun M."/>
            <person name="Huber R."/>
            <person name="Masumoto H."/>
            <person name="Nakagawa K."/>
            <person name="Irie A."/>
            <person name="Sorimachi H."/>
            <person name="Bourenkow G."/>
            <person name="Bartunik H."/>
            <person name="Suzuki K."/>
            <person name="Bode W."/>
        </authorList>
    </citation>
    <scope>X-RAY CRYSTALLOGRAPHY (2.7 ANGSTROMS)</scope>
</reference>
<reference key="17">
    <citation type="journal article" date="2023" name="Genet. Med. Open">
        <title>Biallelic variants in the calpain regulatory subunit CAPNS1 cause pulmonary arterial hypertension.</title>
        <authorList>
            <person name="Postma A.V."/>
            <person name="Rapp C.K."/>
            <person name="Knoflach K."/>
            <person name="Volk A.E."/>
            <person name="Lemke J.R."/>
            <person name="Ackermann M."/>
            <person name="Regamey N."/>
            <person name="Latzin P."/>
            <person name="Celant L."/>
            <person name="Jansen S.M.A."/>
            <person name="Bogaard H.J."/>
            <person name="Ilgun A."/>
            <person name="Alders M."/>
            <person name="van Spaendonck-Zwarts K.Y."/>
            <person name="Jonigk D."/>
            <person name="Klein C."/>
            <person name="Graef S."/>
            <person name="Kubisch C."/>
            <person name="Houweling A.C."/>
            <person name="Griese M."/>
        </authorList>
    </citation>
    <scope>INVOLVEMENT IN PPH6</scope>
</reference>
<proteinExistence type="evidence at protein level"/>
<organism>
    <name type="scientific">Homo sapiens</name>
    <name type="common">Human</name>
    <dbReference type="NCBI Taxonomy" id="9606"/>
    <lineage>
        <taxon>Eukaryota</taxon>
        <taxon>Metazoa</taxon>
        <taxon>Chordata</taxon>
        <taxon>Craniata</taxon>
        <taxon>Vertebrata</taxon>
        <taxon>Euteleostomi</taxon>
        <taxon>Mammalia</taxon>
        <taxon>Eutheria</taxon>
        <taxon>Euarchontoglires</taxon>
        <taxon>Primates</taxon>
        <taxon>Haplorrhini</taxon>
        <taxon>Catarrhini</taxon>
        <taxon>Hominidae</taxon>
        <taxon>Homo</taxon>
    </lineage>
</organism>
<evidence type="ECO:0000250" key="1"/>
<evidence type="ECO:0000250" key="2">
    <source>
        <dbReference type="UniProtKB" id="O88456"/>
    </source>
</evidence>
<evidence type="ECO:0000250" key="3">
    <source>
        <dbReference type="UniProtKB" id="Q64537"/>
    </source>
</evidence>
<evidence type="ECO:0000255" key="4">
    <source>
        <dbReference type="PROSITE-ProRule" id="PRU00448"/>
    </source>
</evidence>
<evidence type="ECO:0000269" key="5">
    <source>
    </source>
</evidence>
<evidence type="ECO:0000269" key="6">
    <source ref="5"/>
</evidence>
<evidence type="ECO:0000269" key="7">
    <source ref="8"/>
</evidence>
<evidence type="ECO:0000305" key="8"/>
<evidence type="ECO:0007744" key="9">
    <source>
    </source>
</evidence>
<evidence type="ECO:0007744" key="10">
    <source>
    </source>
</evidence>
<evidence type="ECO:0007744" key="11">
    <source>
    </source>
</evidence>
<evidence type="ECO:0007744" key="12">
    <source>
    </source>
</evidence>
<evidence type="ECO:0007744" key="13">
    <source>
    </source>
</evidence>
<evidence type="ECO:0007829" key="14">
    <source>
        <dbReference type="PDB" id="4PHJ"/>
    </source>
</evidence>
<evidence type="ECO:0007829" key="15">
    <source>
        <dbReference type="PDB" id="4PHK"/>
    </source>
</evidence>
<feature type="chain" id="PRO_0000073713" description="Calpain small subunit 1">
    <location>
        <begin position="1"/>
        <end position="268"/>
    </location>
</feature>
<feature type="domain" description="EF-hand 1; atypical" evidence="8">
    <location>
        <begin position="91"/>
        <end position="125"/>
    </location>
</feature>
<feature type="domain" description="EF-hand 2" evidence="4">
    <location>
        <begin position="139"/>
        <end position="172"/>
    </location>
</feature>
<feature type="domain" description="EF-hand 3" evidence="4">
    <location>
        <begin position="169"/>
        <end position="204"/>
    </location>
</feature>
<feature type="domain" description="EF-hand 4" evidence="8">
    <location>
        <begin position="205"/>
        <end position="233"/>
    </location>
</feature>
<feature type="domain" description="EF-hand 5" evidence="4">
    <location>
        <begin position="234"/>
        <end position="268"/>
    </location>
</feature>
<feature type="binding site" evidence="3">
    <location>
        <position position="109"/>
    </location>
    <ligand>
        <name>Ca(2+)</name>
        <dbReference type="ChEBI" id="CHEBI:29108"/>
        <label>1</label>
    </ligand>
</feature>
<feature type="binding site" evidence="3">
    <location>
        <position position="112"/>
    </location>
    <ligand>
        <name>Ca(2+)</name>
        <dbReference type="ChEBI" id="CHEBI:29108"/>
        <label>1</label>
    </ligand>
</feature>
<feature type="binding site" evidence="3">
    <location>
        <position position="114"/>
    </location>
    <ligand>
        <name>Ca(2+)</name>
        <dbReference type="ChEBI" id="CHEBI:29108"/>
        <label>1</label>
    </ligand>
</feature>
<feature type="binding site" evidence="3">
    <location>
        <position position="119"/>
    </location>
    <ligand>
        <name>Ca(2+)</name>
        <dbReference type="ChEBI" id="CHEBI:29108"/>
        <label>1</label>
    </ligand>
</feature>
<feature type="binding site" evidence="3">
    <location>
        <position position="137"/>
    </location>
    <ligand>
        <name>Ca(2+)</name>
        <dbReference type="ChEBI" id="CHEBI:29108"/>
        <label>4</label>
    </ligand>
</feature>
<feature type="binding site" evidence="4">
    <location>
        <position position="152"/>
    </location>
    <ligand>
        <name>Ca(2+)</name>
        <dbReference type="ChEBI" id="CHEBI:29108"/>
        <label>2</label>
    </ligand>
</feature>
<feature type="binding site" evidence="4">
    <location>
        <position position="154"/>
    </location>
    <ligand>
        <name>Ca(2+)</name>
        <dbReference type="ChEBI" id="CHEBI:29108"/>
        <label>2</label>
    </ligand>
</feature>
<feature type="binding site" evidence="3 4">
    <location>
        <position position="156"/>
    </location>
    <ligand>
        <name>Ca(2+)</name>
        <dbReference type="ChEBI" id="CHEBI:29108"/>
        <label>2</label>
    </ligand>
</feature>
<feature type="binding site" evidence="3 4">
    <location>
        <position position="158"/>
    </location>
    <ligand>
        <name>Ca(2+)</name>
        <dbReference type="ChEBI" id="CHEBI:29108"/>
        <label>2</label>
    </ligand>
</feature>
<feature type="binding site" evidence="4">
    <location>
        <position position="163"/>
    </location>
    <ligand>
        <name>Ca(2+)</name>
        <dbReference type="ChEBI" id="CHEBI:29108"/>
        <label>2</label>
    </ligand>
</feature>
<feature type="binding site" evidence="4">
    <location>
        <position position="182"/>
    </location>
    <ligand>
        <name>Ca(2+)</name>
        <dbReference type="ChEBI" id="CHEBI:29108"/>
        <label>3</label>
    </ligand>
</feature>
<feature type="binding site" evidence="4">
    <location>
        <position position="184"/>
    </location>
    <ligand>
        <name>Ca(2+)</name>
        <dbReference type="ChEBI" id="CHEBI:29108"/>
        <label>3</label>
    </ligand>
</feature>
<feature type="binding site" evidence="3 4">
    <location>
        <position position="186"/>
    </location>
    <ligand>
        <name>Ca(2+)</name>
        <dbReference type="ChEBI" id="CHEBI:29108"/>
        <label>3</label>
    </ligand>
</feature>
<feature type="binding site" evidence="3 4">
    <location>
        <position position="188"/>
    </location>
    <ligand>
        <name>Ca(2+)</name>
        <dbReference type="ChEBI" id="CHEBI:29108"/>
        <label>3</label>
    </ligand>
</feature>
<feature type="binding site" evidence="4">
    <location>
        <position position="193"/>
    </location>
    <ligand>
        <name>Ca(2+)</name>
        <dbReference type="ChEBI" id="CHEBI:29108"/>
        <label>3</label>
    </ligand>
</feature>
<feature type="binding site" evidence="3">
    <location>
        <position position="225"/>
    </location>
    <ligand>
        <name>Ca(2+)</name>
        <dbReference type="ChEBI" id="CHEBI:29108"/>
        <label>4</label>
    </ligand>
</feature>
<feature type="modified residue" description="N-acetylmethionine" evidence="7 9 11 13">
    <location>
        <position position="1"/>
    </location>
</feature>
<feature type="modified residue" description="Phosphoserine" evidence="12">
    <location>
        <position position="6"/>
    </location>
</feature>
<feature type="modified residue" description="N6-acetyllysine" evidence="10">
    <location>
        <position position="179"/>
    </location>
</feature>
<feature type="sequence variant" id="VAR_021089" description="In dbSNP:rs17878750." evidence="6">
    <original>M</original>
    <variation>V</variation>
    <location>
        <position position="224"/>
    </location>
</feature>
<feature type="sequence conflict" description="In Ref. 7; AAH64998." evidence="8" ref="7">
    <original>N</original>
    <variation>D</variation>
    <location>
        <position position="5"/>
    </location>
</feature>
<feature type="sequence conflict" description="In Ref. 7; AAH64998." evidence="8" ref="7">
    <original>N</original>
    <variation>G</variation>
    <location>
        <position position="27"/>
    </location>
</feature>
<feature type="sequence conflict" description="In Ref. 7; AAH64998." evidence="8" ref="7">
    <original>S</original>
    <variation>G</variation>
    <location>
        <position position="34"/>
    </location>
</feature>
<feature type="sequence conflict" description="In Ref. 7; AAH11903." evidence="8" ref="7">
    <original>WLQLTMYS</original>
    <variation>VRTPILGYGCLGGPHPSALHTSSELQSPSSYFASRPWVRAKGLVLLGFPVLTLHPPLPSGCS</variation>
    <location>
        <begin position="261"/>
        <end position="268"/>
    </location>
</feature>
<feature type="sequence conflict" description="In Ref. 7; AAH21933." evidence="8" ref="7">
    <original>Y</original>
    <variation>F</variation>
    <location>
        <position position="267"/>
    </location>
</feature>
<feature type="helix" evidence="14">
    <location>
        <begin position="97"/>
        <end position="109"/>
    </location>
</feature>
<feature type="helix" evidence="14">
    <location>
        <begin position="110"/>
        <end position="112"/>
    </location>
</feature>
<feature type="helix" evidence="14">
    <location>
        <begin position="117"/>
        <end position="130"/>
    </location>
</feature>
<feature type="helix" evidence="14">
    <location>
        <begin position="141"/>
        <end position="151"/>
    </location>
</feature>
<feature type="strand" evidence="14">
    <location>
        <begin position="156"/>
        <end position="159"/>
    </location>
</feature>
<feature type="helix" evidence="14">
    <location>
        <begin position="161"/>
        <end position="181"/>
    </location>
</feature>
<feature type="strand" evidence="14">
    <location>
        <begin position="187"/>
        <end position="190"/>
    </location>
</feature>
<feature type="turn" evidence="14">
    <location>
        <begin position="191"/>
        <end position="193"/>
    </location>
</feature>
<feature type="helix" evidence="14">
    <location>
        <begin position="194"/>
        <end position="200"/>
    </location>
</feature>
<feature type="helix" evidence="14">
    <location>
        <begin position="207"/>
        <end position="217"/>
    </location>
</feature>
<feature type="strand" evidence="14">
    <location>
        <begin position="222"/>
        <end position="224"/>
    </location>
</feature>
<feature type="helix" evidence="14">
    <location>
        <begin position="226"/>
        <end position="246"/>
    </location>
</feature>
<feature type="turn" evidence="15">
    <location>
        <begin position="247"/>
        <end position="249"/>
    </location>
</feature>
<feature type="strand" evidence="14">
    <location>
        <begin position="252"/>
        <end position="256"/>
    </location>
</feature>
<feature type="helix" evidence="14">
    <location>
        <begin position="258"/>
        <end position="265"/>
    </location>
</feature>
<keyword id="KW-0002">3D-structure</keyword>
<keyword id="KW-0007">Acetylation</keyword>
<keyword id="KW-0106">Calcium</keyword>
<keyword id="KW-1003">Cell membrane</keyword>
<keyword id="KW-0963">Cytoplasm</keyword>
<keyword id="KW-0903">Direct protein sequencing</keyword>
<keyword id="KW-0472">Membrane</keyword>
<keyword id="KW-0479">Metal-binding</keyword>
<keyword id="KW-0597">Phosphoprotein</keyword>
<keyword id="KW-1267">Proteomics identification</keyword>
<keyword id="KW-1185">Reference proteome</keyword>
<keyword id="KW-0677">Repeat</keyword>